<protein>
    <recommendedName>
        <fullName evidence="1">tRNA-cytidine(32) 2-sulfurtransferase</fullName>
        <ecNumber evidence="1">2.8.1.-</ecNumber>
    </recommendedName>
    <alternativeName>
        <fullName evidence="1">Two-thiocytidine biosynthesis protein A</fullName>
    </alternativeName>
    <alternativeName>
        <fullName evidence="1">tRNA 2-thiocytidine biosynthesis protein TtcA</fullName>
    </alternativeName>
</protein>
<sequence>MNAPQTNDTAADGAATEAIAADSGRRALTRREQKEAYENNKLFKRIARQVGQAIGDYNMIEAGDKVMVCLSGGKDSYAMLDVLLRLRERAPIDFDIVAVNLDQKQPGFPEHVLPEYLTQIGVPFHIENQDTYSIVKRLVPEGKTTCSLCSRLRRGILYRVAGELGATKIALGHHRDDILQTLLLNMFYGGKLKGMPPKLQSDDGRNVVIRPLAYVKETDLEKYAELREFPIIPCNLCGSQPNLKRAEMKALIREWDKRFPGRVDNMFSALANVVPSHLMDTGLFPFASLRATGVADPLGDIAFDEEPCASGDATGDAAGNTTSGAARPISIVQFDDL</sequence>
<comment type="function">
    <text evidence="1">Catalyzes the ATP-dependent 2-thiolation of cytidine in position 32 of tRNA, to form 2-thiocytidine (s(2)C32). The sulfur atoms are provided by the cysteine/cysteine desulfurase (IscS) system.</text>
</comment>
<comment type="catalytic activity">
    <reaction evidence="1">
        <text>cytidine(32) in tRNA + S-sulfanyl-L-cysteinyl-[cysteine desulfurase] + AH2 + ATP = 2-thiocytidine(32) in tRNA + L-cysteinyl-[cysteine desulfurase] + A + AMP + diphosphate + H(+)</text>
        <dbReference type="Rhea" id="RHEA:57048"/>
        <dbReference type="Rhea" id="RHEA-COMP:10288"/>
        <dbReference type="Rhea" id="RHEA-COMP:12157"/>
        <dbReference type="Rhea" id="RHEA-COMP:12158"/>
        <dbReference type="Rhea" id="RHEA-COMP:14821"/>
        <dbReference type="ChEBI" id="CHEBI:13193"/>
        <dbReference type="ChEBI" id="CHEBI:15378"/>
        <dbReference type="ChEBI" id="CHEBI:17499"/>
        <dbReference type="ChEBI" id="CHEBI:29950"/>
        <dbReference type="ChEBI" id="CHEBI:30616"/>
        <dbReference type="ChEBI" id="CHEBI:33019"/>
        <dbReference type="ChEBI" id="CHEBI:61963"/>
        <dbReference type="ChEBI" id="CHEBI:82748"/>
        <dbReference type="ChEBI" id="CHEBI:141453"/>
        <dbReference type="ChEBI" id="CHEBI:456215"/>
    </reaction>
    <physiologicalReaction direction="left-to-right" evidence="1">
        <dbReference type="Rhea" id="RHEA:57049"/>
    </physiologicalReaction>
</comment>
<comment type="cofactor">
    <cofactor evidence="1">
        <name>Mg(2+)</name>
        <dbReference type="ChEBI" id="CHEBI:18420"/>
    </cofactor>
</comment>
<comment type="cofactor">
    <cofactor evidence="1">
        <name>[4Fe-4S] cluster</name>
        <dbReference type="ChEBI" id="CHEBI:49883"/>
    </cofactor>
    <text evidence="1">Binds 1 [4Fe-4S] cluster per subunit. The cluster is chelated by three Cys residues, the fourth Fe has a free coordination site that may bind a sulfur atom transferred from the persulfide of IscS.</text>
</comment>
<comment type="pathway">
    <text evidence="1">tRNA modification.</text>
</comment>
<comment type="subunit">
    <text evidence="1">Homodimer.</text>
</comment>
<comment type="subcellular location">
    <subcellularLocation>
        <location evidence="1">Cytoplasm</location>
    </subcellularLocation>
</comment>
<comment type="miscellaneous">
    <text evidence="1">The thiolation reaction likely consists of two steps: a first activation step by ATP to form an adenylated intermediate of the target base of tRNA, and a second nucleophilic substitution step of the sulfur (S) atom supplied by the hydrosulfide attached to the Fe-S cluster.</text>
</comment>
<comment type="similarity">
    <text evidence="1">Belongs to the TtcA family.</text>
</comment>
<accession>A4JIF6</accession>
<gene>
    <name evidence="1" type="primary">ttcA</name>
    <name type="ordered locus">Bcep1808_3068</name>
</gene>
<keyword id="KW-0004">4Fe-4S</keyword>
<keyword id="KW-0067">ATP-binding</keyword>
<keyword id="KW-0963">Cytoplasm</keyword>
<keyword id="KW-0408">Iron</keyword>
<keyword id="KW-0411">Iron-sulfur</keyword>
<keyword id="KW-0460">Magnesium</keyword>
<keyword id="KW-0479">Metal-binding</keyword>
<keyword id="KW-0547">Nucleotide-binding</keyword>
<keyword id="KW-0694">RNA-binding</keyword>
<keyword id="KW-0808">Transferase</keyword>
<keyword id="KW-0819">tRNA processing</keyword>
<keyword id="KW-0820">tRNA-binding</keyword>
<name>TTCA_BURVG</name>
<dbReference type="EC" id="2.8.1.-" evidence="1"/>
<dbReference type="EMBL" id="CP000614">
    <property type="protein sequence ID" value="ABO56059.1"/>
    <property type="molecule type" value="Genomic_DNA"/>
</dbReference>
<dbReference type="SMR" id="A4JIF6"/>
<dbReference type="KEGG" id="bvi:Bcep1808_3068"/>
<dbReference type="eggNOG" id="COG0037">
    <property type="taxonomic scope" value="Bacteria"/>
</dbReference>
<dbReference type="HOGENOM" id="CLU_026481_0_0_4"/>
<dbReference type="Proteomes" id="UP000002287">
    <property type="component" value="Chromosome 1"/>
</dbReference>
<dbReference type="GO" id="GO:0005737">
    <property type="term" value="C:cytoplasm"/>
    <property type="evidence" value="ECO:0007669"/>
    <property type="project" value="UniProtKB-SubCell"/>
</dbReference>
<dbReference type="GO" id="GO:0051539">
    <property type="term" value="F:4 iron, 4 sulfur cluster binding"/>
    <property type="evidence" value="ECO:0007669"/>
    <property type="project" value="UniProtKB-UniRule"/>
</dbReference>
<dbReference type="GO" id="GO:0005524">
    <property type="term" value="F:ATP binding"/>
    <property type="evidence" value="ECO:0007669"/>
    <property type="project" value="UniProtKB-UniRule"/>
</dbReference>
<dbReference type="GO" id="GO:0000287">
    <property type="term" value="F:magnesium ion binding"/>
    <property type="evidence" value="ECO:0007669"/>
    <property type="project" value="UniProtKB-UniRule"/>
</dbReference>
<dbReference type="GO" id="GO:0016783">
    <property type="term" value="F:sulfurtransferase activity"/>
    <property type="evidence" value="ECO:0007669"/>
    <property type="project" value="UniProtKB-UniRule"/>
</dbReference>
<dbReference type="GO" id="GO:0000049">
    <property type="term" value="F:tRNA binding"/>
    <property type="evidence" value="ECO:0007669"/>
    <property type="project" value="UniProtKB-KW"/>
</dbReference>
<dbReference type="GO" id="GO:0034227">
    <property type="term" value="P:tRNA thio-modification"/>
    <property type="evidence" value="ECO:0007669"/>
    <property type="project" value="UniProtKB-UniRule"/>
</dbReference>
<dbReference type="CDD" id="cd24138">
    <property type="entry name" value="TtcA-like"/>
    <property type="match status" value="1"/>
</dbReference>
<dbReference type="Gene3D" id="3.40.50.620">
    <property type="entry name" value="HUPs"/>
    <property type="match status" value="1"/>
</dbReference>
<dbReference type="HAMAP" id="MF_01850">
    <property type="entry name" value="TtcA"/>
    <property type="match status" value="1"/>
</dbReference>
<dbReference type="InterPro" id="IPR014729">
    <property type="entry name" value="Rossmann-like_a/b/a_fold"/>
</dbReference>
<dbReference type="InterPro" id="IPR011063">
    <property type="entry name" value="TilS/TtcA_N"/>
</dbReference>
<dbReference type="InterPro" id="IPR012089">
    <property type="entry name" value="tRNA_Cyd_32_2_STrfase"/>
</dbReference>
<dbReference type="NCBIfam" id="NF007972">
    <property type="entry name" value="PRK10696.1"/>
    <property type="match status" value="1"/>
</dbReference>
<dbReference type="PANTHER" id="PTHR43686:SF1">
    <property type="entry name" value="AMINOTRAN_5 DOMAIN-CONTAINING PROTEIN"/>
    <property type="match status" value="1"/>
</dbReference>
<dbReference type="PANTHER" id="PTHR43686">
    <property type="entry name" value="SULFURTRANSFERASE-RELATED"/>
    <property type="match status" value="1"/>
</dbReference>
<dbReference type="Pfam" id="PF01171">
    <property type="entry name" value="ATP_bind_3"/>
    <property type="match status" value="1"/>
</dbReference>
<dbReference type="SUPFAM" id="SSF52402">
    <property type="entry name" value="Adenine nucleotide alpha hydrolases-like"/>
    <property type="match status" value="1"/>
</dbReference>
<organism>
    <name type="scientific">Burkholderia vietnamiensis (strain G4 / LMG 22486)</name>
    <name type="common">Burkholderia cepacia (strain R1808)</name>
    <dbReference type="NCBI Taxonomy" id="269482"/>
    <lineage>
        <taxon>Bacteria</taxon>
        <taxon>Pseudomonadati</taxon>
        <taxon>Pseudomonadota</taxon>
        <taxon>Betaproteobacteria</taxon>
        <taxon>Burkholderiales</taxon>
        <taxon>Burkholderiaceae</taxon>
        <taxon>Burkholderia</taxon>
        <taxon>Burkholderia cepacia complex</taxon>
    </lineage>
</organism>
<proteinExistence type="inferred from homology"/>
<reference key="1">
    <citation type="submission" date="2007-03" db="EMBL/GenBank/DDBJ databases">
        <title>Complete sequence of chromosome 1 of Burkholderia vietnamiensis G4.</title>
        <authorList>
            <consortium name="US DOE Joint Genome Institute"/>
            <person name="Copeland A."/>
            <person name="Lucas S."/>
            <person name="Lapidus A."/>
            <person name="Barry K."/>
            <person name="Detter J.C."/>
            <person name="Glavina del Rio T."/>
            <person name="Hammon N."/>
            <person name="Israni S."/>
            <person name="Dalin E."/>
            <person name="Tice H."/>
            <person name="Pitluck S."/>
            <person name="Chain P."/>
            <person name="Malfatti S."/>
            <person name="Shin M."/>
            <person name="Vergez L."/>
            <person name="Schmutz J."/>
            <person name="Larimer F."/>
            <person name="Land M."/>
            <person name="Hauser L."/>
            <person name="Kyrpides N."/>
            <person name="Tiedje J."/>
            <person name="Richardson P."/>
        </authorList>
    </citation>
    <scope>NUCLEOTIDE SEQUENCE [LARGE SCALE GENOMIC DNA]</scope>
    <source>
        <strain>G4 / LMG 22486</strain>
    </source>
</reference>
<evidence type="ECO:0000255" key="1">
    <source>
        <dbReference type="HAMAP-Rule" id="MF_01850"/>
    </source>
</evidence>
<feature type="chain" id="PRO_0000348697" description="tRNA-cytidine(32) 2-sulfurtransferase">
    <location>
        <begin position="1"/>
        <end position="337"/>
    </location>
</feature>
<feature type="short sequence motif" description="PP-loop motif" evidence="1">
    <location>
        <begin position="71"/>
        <end position="76"/>
    </location>
</feature>
<feature type="binding site" evidence="1">
    <location>
        <position position="146"/>
    </location>
    <ligand>
        <name>[4Fe-4S] cluster</name>
        <dbReference type="ChEBI" id="CHEBI:49883"/>
    </ligand>
</feature>
<feature type="binding site" evidence="1">
    <location>
        <position position="149"/>
    </location>
    <ligand>
        <name>[4Fe-4S] cluster</name>
        <dbReference type="ChEBI" id="CHEBI:49883"/>
    </ligand>
</feature>
<feature type="binding site" evidence="1">
    <location>
        <position position="237"/>
    </location>
    <ligand>
        <name>[4Fe-4S] cluster</name>
        <dbReference type="ChEBI" id="CHEBI:49883"/>
    </ligand>
</feature>